<protein>
    <recommendedName>
        <fullName evidence="1">D-phenylhydantoinase</fullName>
        <ecNumber evidence="1">3.5.2.-</ecNumber>
    </recommendedName>
    <alternativeName>
        <fullName evidence="1">Hydantoin-utilizing enzyme HyuA</fullName>
    </alternativeName>
</protein>
<keyword id="KW-0378">Hydrolase</keyword>
<keyword id="KW-0479">Metal-binding</keyword>
<reference key="1">
    <citation type="journal article" date="2009" name="J. Bacteriol.">
        <title>Genomic sequencing reveals regulatory mutations and recombinational events in the widely used MC4100 lineage of Escherichia coli K-12.</title>
        <authorList>
            <person name="Ferenci T."/>
            <person name="Zhou Z."/>
            <person name="Betteridge T."/>
            <person name="Ren Y."/>
            <person name="Liu Y."/>
            <person name="Feng L."/>
            <person name="Reeves P.R."/>
            <person name="Wang L."/>
        </authorList>
    </citation>
    <scope>NUCLEOTIDE SEQUENCE [LARGE SCALE GENOMIC DNA]</scope>
    <source>
        <strain>K12 / MC4100 / BW2952</strain>
    </source>
</reference>
<gene>
    <name evidence="1" type="primary">hyuA</name>
    <name type="ordered locus">BWG_2599</name>
</gene>
<organism>
    <name type="scientific">Escherichia coli (strain K12 / MC4100 / BW2952)</name>
    <dbReference type="NCBI Taxonomy" id="595496"/>
    <lineage>
        <taxon>Bacteria</taxon>
        <taxon>Pseudomonadati</taxon>
        <taxon>Pseudomonadota</taxon>
        <taxon>Gammaproteobacteria</taxon>
        <taxon>Enterobacterales</taxon>
        <taxon>Enterobacteriaceae</taxon>
        <taxon>Escherichia</taxon>
    </lineage>
</organism>
<dbReference type="EC" id="3.5.2.-" evidence="1"/>
<dbReference type="EMBL" id="CP001396">
    <property type="protein sequence ID" value="ACR63007.1"/>
    <property type="molecule type" value="Genomic_DNA"/>
</dbReference>
<dbReference type="RefSeq" id="WP_001264442.1">
    <property type="nucleotide sequence ID" value="NC_012759.1"/>
</dbReference>
<dbReference type="SMR" id="C5A0E6"/>
<dbReference type="KEGG" id="ebw:BWG_2599"/>
<dbReference type="HOGENOM" id="CLU_015572_2_0_6"/>
<dbReference type="GO" id="GO:0005829">
    <property type="term" value="C:cytosol"/>
    <property type="evidence" value="ECO:0007669"/>
    <property type="project" value="TreeGrafter"/>
</dbReference>
<dbReference type="GO" id="GO:0016812">
    <property type="term" value="F:hydrolase activity, acting on carbon-nitrogen (but not peptide) bonds, in cyclic amides"/>
    <property type="evidence" value="ECO:0007669"/>
    <property type="project" value="UniProtKB-UniRule"/>
</dbReference>
<dbReference type="GO" id="GO:0046872">
    <property type="term" value="F:metal ion binding"/>
    <property type="evidence" value="ECO:0007669"/>
    <property type="project" value="UniProtKB-KW"/>
</dbReference>
<dbReference type="GO" id="GO:0006208">
    <property type="term" value="P:pyrimidine nucleobase catabolic process"/>
    <property type="evidence" value="ECO:0007669"/>
    <property type="project" value="InterPro"/>
</dbReference>
<dbReference type="CDD" id="cd01314">
    <property type="entry name" value="D-HYD"/>
    <property type="match status" value="1"/>
</dbReference>
<dbReference type="FunFam" id="3.20.20.140:FF:000026">
    <property type="entry name" value="D-phenylhydantoinase"/>
    <property type="match status" value="1"/>
</dbReference>
<dbReference type="Gene3D" id="3.20.20.140">
    <property type="entry name" value="Metal-dependent hydrolases"/>
    <property type="match status" value="1"/>
</dbReference>
<dbReference type="Gene3D" id="2.30.40.10">
    <property type="entry name" value="Urease, subunit C, domain 1"/>
    <property type="match status" value="1"/>
</dbReference>
<dbReference type="HAMAP" id="MF_01644">
    <property type="entry name" value="D_hydantoinase"/>
    <property type="match status" value="1"/>
</dbReference>
<dbReference type="InterPro" id="IPR006680">
    <property type="entry name" value="Amidohydro-rel"/>
</dbReference>
<dbReference type="InterPro" id="IPR023766">
    <property type="entry name" value="D_phenylhydantoinase"/>
</dbReference>
<dbReference type="InterPro" id="IPR011778">
    <property type="entry name" value="Hydantoinase/dihydroPyrase"/>
</dbReference>
<dbReference type="InterPro" id="IPR011059">
    <property type="entry name" value="Metal-dep_hydrolase_composite"/>
</dbReference>
<dbReference type="InterPro" id="IPR032466">
    <property type="entry name" value="Metal_Hydrolase"/>
</dbReference>
<dbReference type="InterPro" id="IPR050378">
    <property type="entry name" value="Metallo-dep_Hydrolases_sf"/>
</dbReference>
<dbReference type="NCBIfam" id="TIGR02033">
    <property type="entry name" value="D-hydantoinase"/>
    <property type="match status" value="1"/>
</dbReference>
<dbReference type="PANTHER" id="PTHR11647:SF1">
    <property type="entry name" value="COLLAPSIN RESPONSE MEDIATOR PROTEIN"/>
    <property type="match status" value="1"/>
</dbReference>
<dbReference type="PANTHER" id="PTHR11647">
    <property type="entry name" value="HYDRANTOINASE/DIHYDROPYRIMIDINASE FAMILY MEMBER"/>
    <property type="match status" value="1"/>
</dbReference>
<dbReference type="Pfam" id="PF01979">
    <property type="entry name" value="Amidohydro_1"/>
    <property type="match status" value="1"/>
</dbReference>
<dbReference type="SUPFAM" id="SSF51338">
    <property type="entry name" value="Composite domain of metallo-dependent hydrolases"/>
    <property type="match status" value="2"/>
</dbReference>
<dbReference type="SUPFAM" id="SSF51556">
    <property type="entry name" value="Metallo-dependent hydrolases"/>
    <property type="match status" value="1"/>
</dbReference>
<sequence>MRVLIKNGTVVNADGQAKQDLLIESGIVRQLGNNISPQLPYEEIDATGCYVFPGGVDVHTHFNIDVGIARSCDDFFTGTRAAACGGTTTIIDHMGFGPNGCRLRHQLEVYRGYAAHKAVIDYSFHGVIQHINHAILDEIPMIVEEGLSSFKLYLTYQYKLNDDEVLQALRRLHESGALTTVHPENDAAIASKRAEFIAAGLTAPRYHALSRPLECEAEAIARMINLAQIAGNAPLYIVHLSNGLGLDYLRLARANHQPVWVETCPQYLLLDERSYDTEDGMKFILSPPLRNVREQDKLWCGISDGAIDVVATDHCTFSMAQRLQISKGDFSRCPNGLPGVENRMQLLFSSGVMTGRITPERFVELTSAMPARLFGLWPQKGLLAPGSDGDVVIIDPRQSQQIQHRHLHDNADYSPWEGFTCQGAIVRTLSRGETIFCDGTFTGKAGRGRFLRRKPFVPPVL</sequence>
<accession>C5A0E6</accession>
<name>PHYDA_ECOBW</name>
<comment type="function">
    <text evidence="1">Catalyzes the stereospecific hydrolysis of the cyclic amide bond of D-hydantoin derivatives with an aromatic side chains at the 5'-position. Has no activity on dihydropyrimidines. The physiological function is unknown.</text>
</comment>
<comment type="catalytic activity">
    <reaction evidence="1">
        <text>D-5-phenylhydantoin + H2O = N-carbamoyl-D-phenylglycine + H(+)</text>
        <dbReference type="Rhea" id="RHEA:51664"/>
        <dbReference type="ChEBI" id="CHEBI:15377"/>
        <dbReference type="ChEBI" id="CHEBI:15378"/>
        <dbReference type="ChEBI" id="CHEBI:140750"/>
        <dbReference type="ChEBI" id="CHEBI:140758"/>
    </reaction>
</comment>
<comment type="cofactor">
    <cofactor evidence="1">
        <name>a divalent metal cation</name>
        <dbReference type="ChEBI" id="CHEBI:60240"/>
    </cofactor>
    <text evidence="1">Binds 2 divalent metal cations per subunit.</text>
</comment>
<comment type="subunit">
    <text evidence="1">Homotetramer.</text>
</comment>
<comment type="PTM">
    <text evidence="1">Carboxylation allows a single lysine to coordinate two divalent metal cations.</text>
</comment>
<comment type="similarity">
    <text evidence="1">Belongs to the metallo-dependent hydrolases superfamily. Hydantoinase/dihydropyrimidinase family.</text>
</comment>
<feature type="chain" id="PRO_1000215842" description="D-phenylhydantoinase">
    <location>
        <begin position="1"/>
        <end position="461"/>
    </location>
</feature>
<feature type="binding site" evidence="1">
    <location>
        <position position="59"/>
    </location>
    <ligand>
        <name>a divalent metal cation</name>
        <dbReference type="ChEBI" id="CHEBI:60240"/>
        <label>1</label>
    </ligand>
</feature>
<feature type="binding site" evidence="1">
    <location>
        <position position="61"/>
    </location>
    <ligand>
        <name>a divalent metal cation</name>
        <dbReference type="ChEBI" id="CHEBI:60240"/>
        <label>1</label>
    </ligand>
</feature>
<feature type="binding site" description="via carbamate group" evidence="1">
    <location>
        <position position="151"/>
    </location>
    <ligand>
        <name>a divalent metal cation</name>
        <dbReference type="ChEBI" id="CHEBI:60240"/>
        <label>1</label>
    </ligand>
</feature>
<feature type="binding site" description="via carbamate group" evidence="1">
    <location>
        <position position="151"/>
    </location>
    <ligand>
        <name>a divalent metal cation</name>
        <dbReference type="ChEBI" id="CHEBI:60240"/>
        <label>2</label>
    </ligand>
</feature>
<feature type="binding site" evidence="1">
    <location>
        <position position="156"/>
    </location>
    <ligand>
        <name>substrate</name>
    </ligand>
</feature>
<feature type="binding site" evidence="1">
    <location>
        <position position="182"/>
    </location>
    <ligand>
        <name>a divalent metal cation</name>
        <dbReference type="ChEBI" id="CHEBI:60240"/>
        <label>2</label>
    </ligand>
</feature>
<feature type="binding site" evidence="1">
    <location>
        <position position="239"/>
    </location>
    <ligand>
        <name>a divalent metal cation</name>
        <dbReference type="ChEBI" id="CHEBI:60240"/>
        <label>2</label>
    </ligand>
</feature>
<feature type="binding site" evidence="1">
    <location>
        <position position="286"/>
    </location>
    <ligand>
        <name>substrate</name>
    </ligand>
</feature>
<feature type="binding site" evidence="1">
    <location>
        <position position="313"/>
    </location>
    <ligand>
        <name>a divalent metal cation</name>
        <dbReference type="ChEBI" id="CHEBI:60240"/>
        <label>1</label>
    </ligand>
</feature>
<feature type="binding site" evidence="1">
    <location>
        <position position="335"/>
    </location>
    <ligand>
        <name>substrate</name>
    </ligand>
</feature>
<feature type="modified residue" description="N6-carboxylysine" evidence="1">
    <location>
        <position position="151"/>
    </location>
</feature>
<evidence type="ECO:0000255" key="1">
    <source>
        <dbReference type="HAMAP-Rule" id="MF_01644"/>
    </source>
</evidence>
<proteinExistence type="inferred from homology"/>